<organism>
    <name type="scientific">Aspergillus terreus (strain NIH 2624 / FGSC A1156)</name>
    <dbReference type="NCBI Taxonomy" id="341663"/>
    <lineage>
        <taxon>Eukaryota</taxon>
        <taxon>Fungi</taxon>
        <taxon>Dikarya</taxon>
        <taxon>Ascomycota</taxon>
        <taxon>Pezizomycotina</taxon>
        <taxon>Eurotiomycetes</taxon>
        <taxon>Eurotiomycetidae</taxon>
        <taxon>Eurotiales</taxon>
        <taxon>Aspergillaceae</taxon>
        <taxon>Aspergillus</taxon>
        <taxon>Aspergillus subgen. Circumdati</taxon>
    </lineage>
</organism>
<keyword id="KW-0106">Calcium</keyword>
<keyword id="KW-0255">Endonuclease</keyword>
<keyword id="KW-0378">Hydrolase</keyword>
<keyword id="KW-0472">Membrane</keyword>
<keyword id="KW-0479">Metal-binding</keyword>
<keyword id="KW-0496">Mitochondrion</keyword>
<keyword id="KW-0540">Nuclease</keyword>
<keyword id="KW-1185">Reference proteome</keyword>
<keyword id="KW-0812">Transmembrane</keyword>
<keyword id="KW-1133">Transmembrane helix</keyword>
<feature type="chain" id="PRO_0000408648" description="Probable endonuclease lcl3">
    <location>
        <begin position="1"/>
        <end position="295"/>
    </location>
</feature>
<feature type="transmembrane region" description="Helical" evidence="2">
    <location>
        <begin position="60"/>
        <end position="76"/>
    </location>
</feature>
<feature type="domain" description="TNase-like" evidence="3">
    <location>
        <begin position="98"/>
        <end position="265"/>
    </location>
</feature>
<feature type="region of interest" description="Disordered" evidence="4">
    <location>
        <begin position="1"/>
        <end position="41"/>
    </location>
</feature>
<feature type="compositionally biased region" description="Low complexity" evidence="4">
    <location>
        <begin position="15"/>
        <end position="36"/>
    </location>
</feature>
<feature type="active site" evidence="3">
    <location>
        <position position="149"/>
    </location>
</feature>
<feature type="active site" evidence="3">
    <location>
        <position position="157"/>
    </location>
</feature>
<feature type="active site" evidence="3">
    <location>
        <position position="197"/>
    </location>
</feature>
<feature type="binding site" evidence="3">
    <location>
        <position position="154"/>
    </location>
    <ligand>
        <name>Ca(2+)</name>
        <dbReference type="ChEBI" id="CHEBI:29108"/>
    </ligand>
</feature>
<dbReference type="EC" id="3.1.-.-"/>
<dbReference type="EMBL" id="CH476596">
    <property type="protein sequence ID" value="EAU37508.1"/>
    <property type="molecule type" value="Genomic_DNA"/>
</dbReference>
<dbReference type="RefSeq" id="XP_001211724.1">
    <property type="nucleotide sequence ID" value="XM_001211724.1"/>
</dbReference>
<dbReference type="SMR" id="Q0CUT8"/>
<dbReference type="STRING" id="341663.Q0CUT8"/>
<dbReference type="EnsemblFungi" id="EAU37508">
    <property type="protein sequence ID" value="EAU37508"/>
    <property type="gene ID" value="ATEG_02546"/>
</dbReference>
<dbReference type="GeneID" id="4316848"/>
<dbReference type="VEuPathDB" id="FungiDB:ATEG_02546"/>
<dbReference type="eggNOG" id="ENOG502S1U4">
    <property type="taxonomic scope" value="Eukaryota"/>
</dbReference>
<dbReference type="HOGENOM" id="CLU_046484_0_1_1"/>
<dbReference type="OMA" id="IYHTPGG"/>
<dbReference type="OrthoDB" id="430293at2759"/>
<dbReference type="Proteomes" id="UP000007963">
    <property type="component" value="Unassembled WGS sequence"/>
</dbReference>
<dbReference type="GO" id="GO:0016020">
    <property type="term" value="C:membrane"/>
    <property type="evidence" value="ECO:0007669"/>
    <property type="project" value="UniProtKB-SubCell"/>
</dbReference>
<dbReference type="GO" id="GO:0005739">
    <property type="term" value="C:mitochondrion"/>
    <property type="evidence" value="ECO:0007669"/>
    <property type="project" value="UniProtKB-SubCell"/>
</dbReference>
<dbReference type="GO" id="GO:0004519">
    <property type="term" value="F:endonuclease activity"/>
    <property type="evidence" value="ECO:0007669"/>
    <property type="project" value="UniProtKB-KW"/>
</dbReference>
<dbReference type="GO" id="GO:0046872">
    <property type="term" value="F:metal ion binding"/>
    <property type="evidence" value="ECO:0007669"/>
    <property type="project" value="UniProtKB-KW"/>
</dbReference>
<dbReference type="FunFam" id="2.40.50.90:FF:000029">
    <property type="entry name" value="Probable endonuclease lcl3"/>
    <property type="match status" value="1"/>
</dbReference>
<dbReference type="Gene3D" id="2.40.50.90">
    <property type="match status" value="1"/>
</dbReference>
<dbReference type="InterPro" id="IPR035437">
    <property type="entry name" value="SNase_OB-fold_sf"/>
</dbReference>
<dbReference type="InterPro" id="IPR016071">
    <property type="entry name" value="Staphylococal_nuclease_OB-fold"/>
</dbReference>
<dbReference type="PANTHER" id="PTHR12302">
    <property type="entry name" value="EBNA2 BINDING PROTEIN P100"/>
    <property type="match status" value="1"/>
</dbReference>
<dbReference type="PANTHER" id="PTHR12302:SF3">
    <property type="entry name" value="SERINE_THREONINE-PROTEIN KINASE 31"/>
    <property type="match status" value="1"/>
</dbReference>
<dbReference type="Pfam" id="PF00565">
    <property type="entry name" value="SNase"/>
    <property type="match status" value="1"/>
</dbReference>
<dbReference type="SMART" id="SM00318">
    <property type="entry name" value="SNc"/>
    <property type="match status" value="1"/>
</dbReference>
<dbReference type="SUPFAM" id="SSF50199">
    <property type="entry name" value="Staphylococcal nuclease"/>
    <property type="match status" value="1"/>
</dbReference>
<dbReference type="PROSITE" id="PS50830">
    <property type="entry name" value="TNASE_3"/>
    <property type="match status" value="1"/>
</dbReference>
<protein>
    <recommendedName>
        <fullName>Probable endonuclease lcl3</fullName>
        <ecNumber>3.1.-.-</ecNumber>
    </recommendedName>
</protein>
<reference key="1">
    <citation type="submission" date="2005-09" db="EMBL/GenBank/DDBJ databases">
        <title>Annotation of the Aspergillus terreus NIH2624 genome.</title>
        <authorList>
            <person name="Birren B.W."/>
            <person name="Lander E.S."/>
            <person name="Galagan J.E."/>
            <person name="Nusbaum C."/>
            <person name="Devon K."/>
            <person name="Henn M."/>
            <person name="Ma L.-J."/>
            <person name="Jaffe D.B."/>
            <person name="Butler J."/>
            <person name="Alvarez P."/>
            <person name="Gnerre S."/>
            <person name="Grabherr M."/>
            <person name="Kleber M."/>
            <person name="Mauceli E.W."/>
            <person name="Brockman W."/>
            <person name="Rounsley S."/>
            <person name="Young S.K."/>
            <person name="LaButti K."/>
            <person name="Pushparaj V."/>
            <person name="DeCaprio D."/>
            <person name="Crawford M."/>
            <person name="Koehrsen M."/>
            <person name="Engels R."/>
            <person name="Montgomery P."/>
            <person name="Pearson M."/>
            <person name="Howarth C."/>
            <person name="Larson L."/>
            <person name="Luoma S."/>
            <person name="White J."/>
            <person name="Alvarado L."/>
            <person name="Kodira C.D."/>
            <person name="Zeng Q."/>
            <person name="Oleary S."/>
            <person name="Yandava C."/>
            <person name="Denning D.W."/>
            <person name="Nierman W.C."/>
            <person name="Milne T."/>
            <person name="Madden K."/>
        </authorList>
    </citation>
    <scope>NUCLEOTIDE SEQUENCE [LARGE SCALE GENOMIC DNA]</scope>
    <source>
        <strain>NIH 2624 / FGSC A1156</strain>
    </source>
</reference>
<sequence>MRWPPWGSESQQADTPSPSTEQQAQQPPTAPAARPSRPNKDWNQSVNAFDWAAFTELRTIIPTAILTTAILGIVHIHRRYLRRFPDAVSIAPSYFRQRSILGQVTSVGDGDNFRLFHTPGGRLAGWGWLPWKKVPTSKKELRDKTVHVRLAGIDAPELAHFGRPAQPFAREAHQWLTAYLMTRRVRAYVHRQDQYQRVVASVYVRRALDFPPFRRRDVSYEMLRRGLATVYEAKAGAEFGGPGMERKYRRAEWWAKFRGLGLWKGFRRNKEWESPREFKTRMGLEDQTQGRENKS</sequence>
<name>LCL3_ASPTN</name>
<proteinExistence type="inferred from homology"/>
<gene>
    <name type="primary">lcl3</name>
    <name type="ORF">ATEG_02546</name>
</gene>
<comment type="subcellular location">
    <subcellularLocation>
        <location>Mitochondrion</location>
    </subcellularLocation>
    <subcellularLocation>
        <location evidence="1">Membrane</location>
        <topology evidence="1">Single-pass membrane protein</topology>
    </subcellularLocation>
</comment>
<comment type="similarity">
    <text evidence="5">Belongs to the LCL3 family.</text>
</comment>
<accession>Q0CUT8</accession>
<evidence type="ECO:0000250" key="1"/>
<evidence type="ECO:0000255" key="2"/>
<evidence type="ECO:0000255" key="3">
    <source>
        <dbReference type="PROSITE-ProRule" id="PRU00272"/>
    </source>
</evidence>
<evidence type="ECO:0000256" key="4">
    <source>
        <dbReference type="SAM" id="MobiDB-lite"/>
    </source>
</evidence>
<evidence type="ECO:0000305" key="5"/>